<dbReference type="EMBL" id="AP002845">
    <property type="protein sequence ID" value="BAD44852.1"/>
    <property type="molecule type" value="Genomic_DNA"/>
</dbReference>
<dbReference type="EMBL" id="AP002863">
    <property type="protein sequence ID" value="BAD44891.1"/>
    <property type="molecule type" value="Genomic_DNA"/>
</dbReference>
<dbReference type="EMBL" id="AP008207">
    <property type="protein sequence ID" value="BAF03699.1"/>
    <property type="status" value="ALT_SEQ"/>
    <property type="molecule type" value="Genomic_DNA"/>
</dbReference>
<dbReference type="EMBL" id="AP014957">
    <property type="protein sequence ID" value="BAS69984.1"/>
    <property type="molecule type" value="Genomic_DNA"/>
</dbReference>
<dbReference type="EMBL" id="CM000138">
    <property type="protein sequence ID" value="EAZ10235.1"/>
    <property type="molecule type" value="Genomic_DNA"/>
</dbReference>
<dbReference type="EMBL" id="AK070363">
    <property type="protein sequence ID" value="BAG91905.1"/>
    <property type="molecule type" value="mRNA"/>
</dbReference>
<dbReference type="RefSeq" id="XP_015647632.1">
    <property type="nucleotide sequence ID" value="XM_015792146.1"/>
</dbReference>
<dbReference type="SMR" id="Q657X6"/>
<dbReference type="FunCoup" id="Q657X6">
    <property type="interactions" value="2298"/>
</dbReference>
<dbReference type="STRING" id="39947.Q657X6"/>
<dbReference type="PaxDb" id="39947-Q657X6"/>
<dbReference type="EnsemblPlants" id="Os01t0107900-01">
    <property type="protein sequence ID" value="Os01t0107900-01"/>
    <property type="gene ID" value="Os01g0107900"/>
</dbReference>
<dbReference type="Gramene" id="Os01t0107900-01">
    <property type="protein sequence ID" value="Os01t0107900-01"/>
    <property type="gene ID" value="Os01g0107900"/>
</dbReference>
<dbReference type="KEGG" id="dosa:Os01g0107900"/>
<dbReference type="eggNOG" id="ENOG502QQS3">
    <property type="taxonomic scope" value="Eukaryota"/>
</dbReference>
<dbReference type="HOGENOM" id="CLU_019201_0_0_1"/>
<dbReference type="InParanoid" id="Q657X6"/>
<dbReference type="OMA" id="SSLEWDW"/>
<dbReference type="OrthoDB" id="722566at2759"/>
<dbReference type="Proteomes" id="UP000000763">
    <property type="component" value="Chromosome 1"/>
</dbReference>
<dbReference type="Proteomes" id="UP000007752">
    <property type="component" value="Chromosome 1"/>
</dbReference>
<dbReference type="Proteomes" id="UP000059680">
    <property type="component" value="Chromosome 1"/>
</dbReference>
<dbReference type="ExpressionAtlas" id="Q657X6">
    <property type="expression patterns" value="baseline and differential"/>
</dbReference>
<dbReference type="GO" id="GO:0009507">
    <property type="term" value="C:chloroplast"/>
    <property type="evidence" value="ECO:0007669"/>
    <property type="project" value="UniProtKB-SubCell"/>
</dbReference>
<dbReference type="GO" id="GO:0042651">
    <property type="term" value="C:thylakoid membrane"/>
    <property type="evidence" value="ECO:0000318"/>
    <property type="project" value="GO_Central"/>
</dbReference>
<dbReference type="GO" id="GO:0000304">
    <property type="term" value="P:response to singlet oxygen"/>
    <property type="evidence" value="ECO:0000318"/>
    <property type="project" value="GO_Central"/>
</dbReference>
<dbReference type="GO" id="GO:0010343">
    <property type="term" value="P:singlet oxygen-mediated programmed cell death"/>
    <property type="evidence" value="ECO:0007669"/>
    <property type="project" value="InterPro"/>
</dbReference>
<dbReference type="InterPro" id="IPR044680">
    <property type="entry name" value="EX1/2"/>
</dbReference>
<dbReference type="PANTHER" id="PTHR33917">
    <property type="entry name" value="PROTEIN EXECUTER 1, CHLOROPLASTIC"/>
    <property type="match status" value="1"/>
</dbReference>
<dbReference type="PANTHER" id="PTHR33917:SF2">
    <property type="entry name" value="PROTEIN EXECUTER 2, CHLOROPLASTIC"/>
    <property type="match status" value="1"/>
</dbReference>
<dbReference type="Pfam" id="PF12014">
    <property type="entry name" value="Cyclin_D1_bind"/>
    <property type="match status" value="1"/>
</dbReference>
<comment type="function">
    <text evidence="1">Together with EX1, enables higher plants to perceive singlet oxygen as a stress signal in plastid that activates a genetically determined nuclear stress response program which triggers a programmed cell death (PCD). This transfer of singlet oxygen-induced stress-related signals from the plastid to the nucleus that triggers genetically controlled PCD pathway is unique to photosynthetic eukaryotes and operates under mild stress conditions, impeding photosystem II (PSII) without causing photooxidative damage of the plant.</text>
</comment>
<comment type="subcellular location">
    <subcellularLocation>
        <location evidence="1">Plastid</location>
        <location evidence="1">Chloroplast</location>
    </subcellularLocation>
</comment>
<comment type="sequence caution" evidence="5">
    <conflict type="erroneous gene model prediction">
        <sequence resource="EMBL-CDS" id="BAF03699"/>
    </conflict>
</comment>
<keyword id="KW-0150">Chloroplast</keyword>
<keyword id="KW-0934">Plastid</keyword>
<keyword id="KW-1185">Reference proteome</keyword>
<keyword id="KW-0346">Stress response</keyword>
<keyword id="KW-0809">Transit peptide</keyword>
<evidence type="ECO:0000250" key="1">
    <source>
        <dbReference type="UniProtKB" id="Q94AT5"/>
    </source>
</evidence>
<evidence type="ECO:0000255" key="2"/>
<evidence type="ECO:0000256" key="3">
    <source>
        <dbReference type="SAM" id="MobiDB-lite"/>
    </source>
</evidence>
<evidence type="ECO:0000303" key="4">
    <source>
    </source>
</evidence>
<evidence type="ECO:0000305" key="5"/>
<evidence type="ECO:0000312" key="6">
    <source>
        <dbReference type="EMBL" id="BAD44852.1"/>
    </source>
</evidence>
<evidence type="ECO:0000312" key="7">
    <source>
        <dbReference type="EMBL" id="BAD44891.1"/>
    </source>
</evidence>
<evidence type="ECO:0000312" key="8">
    <source>
        <dbReference type="EMBL" id="BAF03699.1"/>
    </source>
</evidence>
<evidence type="ECO:0000312" key="9">
    <source>
        <dbReference type="EMBL" id="EAZ10235.1"/>
    </source>
</evidence>
<accession>Q657X6</accession>
<accession>A0A0P0UXA6</accession>
<accession>Q0JRC9</accession>
<sequence>MSAATACASPAAARPPLHIPLRSPPSAAHLPSAAASRRASSAACRCTASASASASPSTWDWTRWTRHFADVDQAESYASLLKFQLEEAVDNEDFAEASKLKKAILEATGNDAVAQVMSELKTAIEEQRYQDASRLTKLARTNLVGWWVGYAKDTDDSIGRIVRISPGVGRYVAKSFSPRQLVTASSGTPLFEIFLVRDDDETYTMKVVHMRPTKGTSSASSVSSATAESPAKEENESSLESSAISEGITDEANTDTTLKGDEDVEDKEQDVGNAKDSSVEGLKSVLNFFKSRIPEFKVQVINVDVSEEAELASDSSEELVQDDVKSTSENSLEDSTTEELQQDDVPDGDSDSAEDSKSPEMKLFISGVVHNKEDAGAKSYVRVPAEINNLEKDSFELYIPGKGSDRDLADTKAAKQKVADMAAKLASELMPSDVAKALWGTTKSSSKINKEVQELLKLTLSKARVKLTENTIFNRIITDSNGSDPFSGLYVGAFSPYGPEVVQLRRKFGHWNSTDEVEFFEYVEAVKLTGDLSVPAGQITFRAKIGKGKRLENRGAYPEEFGVIASYKGQGRIAQPGFKNPRWVDGELLVLNGKSTIPHLGGAELGFLYSVPEQSFLVLFDRLKLPE</sequence>
<protein>
    <recommendedName>
        <fullName evidence="5">Protein EXECUTER 2, chloroplastic</fullName>
        <shortName evidence="4">OsEX2</shortName>
    </recommendedName>
</protein>
<gene>
    <name evidence="5" type="primary">EX2</name>
    <name evidence="8" type="ordered locus">Os01g0107900</name>
    <name evidence="9" type="ORF">OsJ_00066</name>
    <name evidence="7" type="ORF">P0005A05.36</name>
    <name evidence="6" type="ORF">P0482C06.14</name>
</gene>
<feature type="transit peptide" description="Chloroplast" evidence="2">
    <location>
        <begin position="1"/>
        <end position="45"/>
    </location>
</feature>
<feature type="chain" id="PRO_0000431897" description="Protein EXECUTER 2, chloroplastic" evidence="2">
    <location>
        <begin position="46"/>
        <end position="627"/>
    </location>
</feature>
<feature type="region of interest" description="Disordered" evidence="3">
    <location>
        <begin position="1"/>
        <end position="34"/>
    </location>
</feature>
<feature type="region of interest" description="Disordered" evidence="3">
    <location>
        <begin position="212"/>
        <end position="277"/>
    </location>
</feature>
<feature type="region of interest" description="Disordered" evidence="3">
    <location>
        <begin position="308"/>
        <end position="359"/>
    </location>
</feature>
<feature type="compositionally biased region" description="Low complexity" evidence="3">
    <location>
        <begin position="217"/>
        <end position="229"/>
    </location>
</feature>
<feature type="compositionally biased region" description="Acidic residues" evidence="3">
    <location>
        <begin position="308"/>
        <end position="321"/>
    </location>
</feature>
<feature type="compositionally biased region" description="Acidic residues" evidence="3">
    <location>
        <begin position="331"/>
        <end position="353"/>
    </location>
</feature>
<reference key="1">
    <citation type="journal article" date="2002" name="Nature">
        <title>The genome sequence and structure of rice chromosome 1.</title>
        <authorList>
            <person name="Sasaki T."/>
            <person name="Matsumoto T."/>
            <person name="Yamamoto K."/>
            <person name="Sakata K."/>
            <person name="Baba T."/>
            <person name="Katayose Y."/>
            <person name="Wu J."/>
            <person name="Niimura Y."/>
            <person name="Cheng Z."/>
            <person name="Nagamura Y."/>
            <person name="Antonio B.A."/>
            <person name="Kanamori H."/>
            <person name="Hosokawa S."/>
            <person name="Masukawa M."/>
            <person name="Arikawa K."/>
            <person name="Chiden Y."/>
            <person name="Hayashi M."/>
            <person name="Okamoto M."/>
            <person name="Ando T."/>
            <person name="Aoki H."/>
            <person name="Arita K."/>
            <person name="Hamada M."/>
            <person name="Harada C."/>
            <person name="Hijishita S."/>
            <person name="Honda M."/>
            <person name="Ichikawa Y."/>
            <person name="Idonuma A."/>
            <person name="Iijima M."/>
            <person name="Ikeda M."/>
            <person name="Ikeno M."/>
            <person name="Ito S."/>
            <person name="Ito T."/>
            <person name="Ito Y."/>
            <person name="Ito Y."/>
            <person name="Iwabuchi A."/>
            <person name="Kamiya K."/>
            <person name="Karasawa W."/>
            <person name="Katagiri S."/>
            <person name="Kikuta A."/>
            <person name="Kobayashi N."/>
            <person name="Kono I."/>
            <person name="Machita K."/>
            <person name="Maehara T."/>
            <person name="Mizuno H."/>
            <person name="Mizubayashi T."/>
            <person name="Mukai Y."/>
            <person name="Nagasaki H."/>
            <person name="Nakashima M."/>
            <person name="Nakama Y."/>
            <person name="Nakamichi Y."/>
            <person name="Nakamura M."/>
            <person name="Namiki N."/>
            <person name="Negishi M."/>
            <person name="Ohta I."/>
            <person name="Ono N."/>
            <person name="Saji S."/>
            <person name="Sakai K."/>
            <person name="Shibata M."/>
            <person name="Shimokawa T."/>
            <person name="Shomura A."/>
            <person name="Song J."/>
            <person name="Takazaki Y."/>
            <person name="Terasawa K."/>
            <person name="Tsuji K."/>
            <person name="Waki K."/>
            <person name="Yamagata H."/>
            <person name="Yamane H."/>
            <person name="Yoshiki S."/>
            <person name="Yoshihara R."/>
            <person name="Yukawa K."/>
            <person name="Zhong H."/>
            <person name="Iwama H."/>
            <person name="Endo T."/>
            <person name="Ito H."/>
            <person name="Hahn J.H."/>
            <person name="Kim H.-I."/>
            <person name="Eun M.-Y."/>
            <person name="Yano M."/>
            <person name="Jiang J."/>
            <person name="Gojobori T."/>
        </authorList>
    </citation>
    <scope>NUCLEOTIDE SEQUENCE [LARGE SCALE GENOMIC DNA]</scope>
    <source>
        <strain>cv. Nipponbare</strain>
    </source>
</reference>
<reference key="2">
    <citation type="journal article" date="2005" name="Nature">
        <title>The map-based sequence of the rice genome.</title>
        <authorList>
            <consortium name="International rice genome sequencing project (IRGSP)"/>
        </authorList>
    </citation>
    <scope>NUCLEOTIDE SEQUENCE [LARGE SCALE GENOMIC DNA]</scope>
    <source>
        <strain>cv. Nipponbare</strain>
    </source>
</reference>
<reference key="3">
    <citation type="journal article" date="2008" name="Nucleic Acids Res.">
        <title>The rice annotation project database (RAP-DB): 2008 update.</title>
        <authorList>
            <consortium name="The rice annotation project (RAP)"/>
        </authorList>
    </citation>
    <scope>GENOME REANNOTATION</scope>
    <source>
        <strain>cv. Nipponbare</strain>
    </source>
</reference>
<reference key="4">
    <citation type="journal article" date="2013" name="Rice">
        <title>Improvement of the Oryza sativa Nipponbare reference genome using next generation sequence and optical map data.</title>
        <authorList>
            <person name="Kawahara Y."/>
            <person name="de la Bastide M."/>
            <person name="Hamilton J.P."/>
            <person name="Kanamori H."/>
            <person name="McCombie W.R."/>
            <person name="Ouyang S."/>
            <person name="Schwartz D.C."/>
            <person name="Tanaka T."/>
            <person name="Wu J."/>
            <person name="Zhou S."/>
            <person name="Childs K.L."/>
            <person name="Davidson R.M."/>
            <person name="Lin H."/>
            <person name="Quesada-Ocampo L."/>
            <person name="Vaillancourt B."/>
            <person name="Sakai H."/>
            <person name="Lee S.S."/>
            <person name="Kim J."/>
            <person name="Numa H."/>
            <person name="Itoh T."/>
            <person name="Buell C.R."/>
            <person name="Matsumoto T."/>
        </authorList>
    </citation>
    <scope>GENOME REANNOTATION</scope>
    <source>
        <strain>cv. Nipponbare</strain>
    </source>
</reference>
<reference key="5">
    <citation type="journal article" date="2005" name="PLoS Biol.">
        <title>The genomes of Oryza sativa: a history of duplications.</title>
        <authorList>
            <person name="Yu J."/>
            <person name="Wang J."/>
            <person name="Lin W."/>
            <person name="Li S."/>
            <person name="Li H."/>
            <person name="Zhou J."/>
            <person name="Ni P."/>
            <person name="Dong W."/>
            <person name="Hu S."/>
            <person name="Zeng C."/>
            <person name="Zhang J."/>
            <person name="Zhang Y."/>
            <person name="Li R."/>
            <person name="Xu Z."/>
            <person name="Li S."/>
            <person name="Li X."/>
            <person name="Zheng H."/>
            <person name="Cong L."/>
            <person name="Lin L."/>
            <person name="Yin J."/>
            <person name="Geng J."/>
            <person name="Li G."/>
            <person name="Shi J."/>
            <person name="Liu J."/>
            <person name="Lv H."/>
            <person name="Li J."/>
            <person name="Wang J."/>
            <person name="Deng Y."/>
            <person name="Ran L."/>
            <person name="Shi X."/>
            <person name="Wang X."/>
            <person name="Wu Q."/>
            <person name="Li C."/>
            <person name="Ren X."/>
            <person name="Wang J."/>
            <person name="Wang X."/>
            <person name="Li D."/>
            <person name="Liu D."/>
            <person name="Zhang X."/>
            <person name="Ji Z."/>
            <person name="Zhao W."/>
            <person name="Sun Y."/>
            <person name="Zhang Z."/>
            <person name="Bao J."/>
            <person name="Han Y."/>
            <person name="Dong L."/>
            <person name="Ji J."/>
            <person name="Chen P."/>
            <person name="Wu S."/>
            <person name="Liu J."/>
            <person name="Xiao Y."/>
            <person name="Bu D."/>
            <person name="Tan J."/>
            <person name="Yang L."/>
            <person name="Ye C."/>
            <person name="Zhang J."/>
            <person name="Xu J."/>
            <person name="Zhou Y."/>
            <person name="Yu Y."/>
            <person name="Zhang B."/>
            <person name="Zhuang S."/>
            <person name="Wei H."/>
            <person name="Liu B."/>
            <person name="Lei M."/>
            <person name="Yu H."/>
            <person name="Li Y."/>
            <person name="Xu H."/>
            <person name="Wei S."/>
            <person name="He X."/>
            <person name="Fang L."/>
            <person name="Zhang Z."/>
            <person name="Zhang Y."/>
            <person name="Huang X."/>
            <person name="Su Z."/>
            <person name="Tong W."/>
            <person name="Li J."/>
            <person name="Tong Z."/>
            <person name="Li S."/>
            <person name="Ye J."/>
            <person name="Wang L."/>
            <person name="Fang L."/>
            <person name="Lei T."/>
            <person name="Chen C.-S."/>
            <person name="Chen H.-C."/>
            <person name="Xu Z."/>
            <person name="Li H."/>
            <person name="Huang H."/>
            <person name="Zhang F."/>
            <person name="Xu H."/>
            <person name="Li N."/>
            <person name="Zhao C."/>
            <person name="Li S."/>
            <person name="Dong L."/>
            <person name="Huang Y."/>
            <person name="Li L."/>
            <person name="Xi Y."/>
            <person name="Qi Q."/>
            <person name="Li W."/>
            <person name="Zhang B."/>
            <person name="Hu W."/>
            <person name="Zhang Y."/>
            <person name="Tian X."/>
            <person name="Jiao Y."/>
            <person name="Liang X."/>
            <person name="Jin J."/>
            <person name="Gao L."/>
            <person name="Zheng W."/>
            <person name="Hao B."/>
            <person name="Liu S.-M."/>
            <person name="Wang W."/>
            <person name="Yuan L."/>
            <person name="Cao M."/>
            <person name="McDermott J."/>
            <person name="Samudrala R."/>
            <person name="Wang J."/>
            <person name="Wong G.K.-S."/>
            <person name="Yang H."/>
        </authorList>
    </citation>
    <scope>NUCLEOTIDE SEQUENCE [LARGE SCALE GENOMIC DNA]</scope>
    <source>
        <strain>cv. Nipponbare</strain>
    </source>
</reference>
<reference key="6">
    <citation type="journal article" date="2003" name="Science">
        <title>Collection, mapping, and annotation of over 28,000 cDNA clones from japonica rice.</title>
        <authorList>
            <consortium name="The rice full-length cDNA consortium"/>
        </authorList>
    </citation>
    <scope>NUCLEOTIDE SEQUENCE [LARGE SCALE MRNA]</scope>
    <source>
        <strain>cv. Nipponbare</strain>
    </source>
</reference>
<reference key="7">
    <citation type="journal article" date="2007" name="Proc. Natl. Acad. Sci. U.S.A.">
        <title>EXECUTER1- and EXECUTER2-dependent transfer of stress-related signals from the plastid to the nucleus of Arabidopsis thaliana.</title>
        <authorList>
            <person name="Lee K.P."/>
            <person name="Kim C."/>
            <person name="Landgraf F."/>
            <person name="Apel K."/>
        </authorList>
    </citation>
    <scope>GENE FAMILY</scope>
    <scope>NOMENCLATURE</scope>
</reference>
<organism>
    <name type="scientific">Oryza sativa subsp. japonica</name>
    <name type="common">Rice</name>
    <dbReference type="NCBI Taxonomy" id="39947"/>
    <lineage>
        <taxon>Eukaryota</taxon>
        <taxon>Viridiplantae</taxon>
        <taxon>Streptophyta</taxon>
        <taxon>Embryophyta</taxon>
        <taxon>Tracheophyta</taxon>
        <taxon>Spermatophyta</taxon>
        <taxon>Magnoliopsida</taxon>
        <taxon>Liliopsida</taxon>
        <taxon>Poales</taxon>
        <taxon>Poaceae</taxon>
        <taxon>BOP clade</taxon>
        <taxon>Oryzoideae</taxon>
        <taxon>Oryzeae</taxon>
        <taxon>Oryzinae</taxon>
        <taxon>Oryza</taxon>
        <taxon>Oryza sativa</taxon>
    </lineage>
</organism>
<proteinExistence type="evidence at transcript level"/>
<name>EXEC2_ORYSJ</name>